<reference key="1">
    <citation type="journal article" date="1987" name="EMBO J.">
        <title>Developmental and molecular analysis of Deformed: a homeotic gene controlling Drosophila head development.</title>
        <authorList>
            <person name="Regulski M."/>
            <person name="McGinnis N."/>
            <person name="Chadwick R."/>
            <person name="McGinnis W."/>
        </authorList>
    </citation>
    <scope>NUCLEOTIDE SEQUENCE [GENOMIC DNA]</scope>
    <scope>FUNCTION</scope>
</reference>
<reference key="2">
    <citation type="submission" date="2001-06" db="EMBL/GenBank/DDBJ databases">
        <title>Complete sequence of the Antennapedia complex of Drosophila.</title>
        <authorList>
            <person name="Celniker S.E."/>
            <person name="Pfeiffer B.D."/>
            <person name="Knafels J."/>
            <person name="Martin C.H."/>
            <person name="Mayeda C.A."/>
            <person name="Palazzolo M.J."/>
        </authorList>
    </citation>
    <scope>NUCLEOTIDE SEQUENCE [GENOMIC DNA]</scope>
    <source>
        <strain>Berkeley</strain>
    </source>
</reference>
<reference key="3">
    <citation type="journal article" date="2000" name="Science">
        <title>The genome sequence of Drosophila melanogaster.</title>
        <authorList>
            <person name="Adams M.D."/>
            <person name="Celniker S.E."/>
            <person name="Holt R.A."/>
            <person name="Evans C.A."/>
            <person name="Gocayne J.D."/>
            <person name="Amanatides P.G."/>
            <person name="Scherer S.E."/>
            <person name="Li P.W."/>
            <person name="Hoskins R.A."/>
            <person name="Galle R.F."/>
            <person name="George R.A."/>
            <person name="Lewis S.E."/>
            <person name="Richards S."/>
            <person name="Ashburner M."/>
            <person name="Henderson S.N."/>
            <person name="Sutton G.G."/>
            <person name="Wortman J.R."/>
            <person name="Yandell M.D."/>
            <person name="Zhang Q."/>
            <person name="Chen L.X."/>
            <person name="Brandon R.C."/>
            <person name="Rogers Y.-H.C."/>
            <person name="Blazej R.G."/>
            <person name="Champe M."/>
            <person name="Pfeiffer B.D."/>
            <person name="Wan K.H."/>
            <person name="Doyle C."/>
            <person name="Baxter E.G."/>
            <person name="Helt G."/>
            <person name="Nelson C.R."/>
            <person name="Miklos G.L.G."/>
            <person name="Abril J.F."/>
            <person name="Agbayani A."/>
            <person name="An H.-J."/>
            <person name="Andrews-Pfannkoch C."/>
            <person name="Baldwin D."/>
            <person name="Ballew R.M."/>
            <person name="Basu A."/>
            <person name="Baxendale J."/>
            <person name="Bayraktaroglu L."/>
            <person name="Beasley E.M."/>
            <person name="Beeson K.Y."/>
            <person name="Benos P.V."/>
            <person name="Berman B.P."/>
            <person name="Bhandari D."/>
            <person name="Bolshakov S."/>
            <person name="Borkova D."/>
            <person name="Botchan M.R."/>
            <person name="Bouck J."/>
            <person name="Brokstein P."/>
            <person name="Brottier P."/>
            <person name="Burtis K.C."/>
            <person name="Busam D.A."/>
            <person name="Butler H."/>
            <person name="Cadieu E."/>
            <person name="Center A."/>
            <person name="Chandra I."/>
            <person name="Cherry J.M."/>
            <person name="Cawley S."/>
            <person name="Dahlke C."/>
            <person name="Davenport L.B."/>
            <person name="Davies P."/>
            <person name="de Pablos B."/>
            <person name="Delcher A."/>
            <person name="Deng Z."/>
            <person name="Mays A.D."/>
            <person name="Dew I."/>
            <person name="Dietz S.M."/>
            <person name="Dodson K."/>
            <person name="Doup L.E."/>
            <person name="Downes M."/>
            <person name="Dugan-Rocha S."/>
            <person name="Dunkov B.C."/>
            <person name="Dunn P."/>
            <person name="Durbin K.J."/>
            <person name="Evangelista C.C."/>
            <person name="Ferraz C."/>
            <person name="Ferriera S."/>
            <person name="Fleischmann W."/>
            <person name="Fosler C."/>
            <person name="Gabrielian A.E."/>
            <person name="Garg N.S."/>
            <person name="Gelbart W.M."/>
            <person name="Glasser K."/>
            <person name="Glodek A."/>
            <person name="Gong F."/>
            <person name="Gorrell J.H."/>
            <person name="Gu Z."/>
            <person name="Guan P."/>
            <person name="Harris M."/>
            <person name="Harris N.L."/>
            <person name="Harvey D.A."/>
            <person name="Heiman T.J."/>
            <person name="Hernandez J.R."/>
            <person name="Houck J."/>
            <person name="Hostin D."/>
            <person name="Houston K.A."/>
            <person name="Howland T.J."/>
            <person name="Wei M.-H."/>
            <person name="Ibegwam C."/>
            <person name="Jalali M."/>
            <person name="Kalush F."/>
            <person name="Karpen G.H."/>
            <person name="Ke Z."/>
            <person name="Kennison J.A."/>
            <person name="Ketchum K.A."/>
            <person name="Kimmel B.E."/>
            <person name="Kodira C.D."/>
            <person name="Kraft C.L."/>
            <person name="Kravitz S."/>
            <person name="Kulp D."/>
            <person name="Lai Z."/>
            <person name="Lasko P."/>
            <person name="Lei Y."/>
            <person name="Levitsky A.A."/>
            <person name="Li J.H."/>
            <person name="Li Z."/>
            <person name="Liang Y."/>
            <person name="Lin X."/>
            <person name="Liu X."/>
            <person name="Mattei B."/>
            <person name="McIntosh T.C."/>
            <person name="McLeod M.P."/>
            <person name="McPherson D."/>
            <person name="Merkulov G."/>
            <person name="Milshina N.V."/>
            <person name="Mobarry C."/>
            <person name="Morris J."/>
            <person name="Moshrefi A."/>
            <person name="Mount S.M."/>
            <person name="Moy M."/>
            <person name="Murphy B."/>
            <person name="Murphy L."/>
            <person name="Muzny D.M."/>
            <person name="Nelson D.L."/>
            <person name="Nelson D.R."/>
            <person name="Nelson K.A."/>
            <person name="Nixon K."/>
            <person name="Nusskern D.R."/>
            <person name="Pacleb J.M."/>
            <person name="Palazzolo M."/>
            <person name="Pittman G.S."/>
            <person name="Pan S."/>
            <person name="Pollard J."/>
            <person name="Puri V."/>
            <person name="Reese M.G."/>
            <person name="Reinert K."/>
            <person name="Remington K."/>
            <person name="Saunders R.D.C."/>
            <person name="Scheeler F."/>
            <person name="Shen H."/>
            <person name="Shue B.C."/>
            <person name="Siden-Kiamos I."/>
            <person name="Simpson M."/>
            <person name="Skupski M.P."/>
            <person name="Smith T.J."/>
            <person name="Spier E."/>
            <person name="Spradling A.C."/>
            <person name="Stapleton M."/>
            <person name="Strong R."/>
            <person name="Sun E."/>
            <person name="Svirskas R."/>
            <person name="Tector C."/>
            <person name="Turner R."/>
            <person name="Venter E."/>
            <person name="Wang A.H."/>
            <person name="Wang X."/>
            <person name="Wang Z.-Y."/>
            <person name="Wassarman D.A."/>
            <person name="Weinstock G.M."/>
            <person name="Weissenbach J."/>
            <person name="Williams S.M."/>
            <person name="Woodage T."/>
            <person name="Worley K.C."/>
            <person name="Wu D."/>
            <person name="Yang S."/>
            <person name="Yao Q.A."/>
            <person name="Ye J."/>
            <person name="Yeh R.-F."/>
            <person name="Zaveri J.S."/>
            <person name="Zhan M."/>
            <person name="Zhang G."/>
            <person name="Zhao Q."/>
            <person name="Zheng L."/>
            <person name="Zheng X.H."/>
            <person name="Zhong F.N."/>
            <person name="Zhong W."/>
            <person name="Zhou X."/>
            <person name="Zhu S.C."/>
            <person name="Zhu X."/>
            <person name="Smith H.O."/>
            <person name="Gibbs R.A."/>
            <person name="Myers E.W."/>
            <person name="Rubin G.M."/>
            <person name="Venter J.C."/>
        </authorList>
    </citation>
    <scope>NUCLEOTIDE SEQUENCE [LARGE SCALE GENOMIC DNA]</scope>
    <source>
        <strain>Berkeley</strain>
    </source>
</reference>
<reference key="4">
    <citation type="journal article" date="2002" name="Genome Biol.">
        <title>Annotation of the Drosophila melanogaster euchromatic genome: a systematic review.</title>
        <authorList>
            <person name="Misra S."/>
            <person name="Crosby M.A."/>
            <person name="Mungall C.J."/>
            <person name="Matthews B.B."/>
            <person name="Campbell K.S."/>
            <person name="Hradecky P."/>
            <person name="Huang Y."/>
            <person name="Kaminker J.S."/>
            <person name="Millburn G.H."/>
            <person name="Prochnik S.E."/>
            <person name="Smith C.D."/>
            <person name="Tupy J.L."/>
            <person name="Whitfield E.J."/>
            <person name="Bayraktaroglu L."/>
            <person name="Berman B.P."/>
            <person name="Bettencourt B.R."/>
            <person name="Celniker S.E."/>
            <person name="de Grey A.D.N.J."/>
            <person name="Drysdale R.A."/>
            <person name="Harris N.L."/>
            <person name="Richter J."/>
            <person name="Russo S."/>
            <person name="Schroeder A.J."/>
            <person name="Shu S.Q."/>
            <person name="Stapleton M."/>
            <person name="Yamada C."/>
            <person name="Ashburner M."/>
            <person name="Gelbart W.M."/>
            <person name="Rubin G.M."/>
            <person name="Lewis S.E."/>
        </authorList>
    </citation>
    <scope>GENOME REANNOTATION</scope>
    <source>
        <strain>Berkeley</strain>
    </source>
</reference>
<reference key="5">
    <citation type="journal article" date="1985" name="Cold Spring Harb. Symp. Quant. Biol.">
        <title>Common properties of proteins encoded by the Antennapedia complex genes of Drosophila melanogaster.</title>
        <authorList>
            <person name="Laughon A."/>
            <person name="Carroll S.B."/>
            <person name="Storfer F.A."/>
            <person name="Riley P.D."/>
            <person name="Scott M.P."/>
        </authorList>
    </citation>
    <scope>NUCLEOTIDE SEQUENCE [MRNA] OF 163-586</scope>
</reference>
<reference key="6">
    <citation type="journal article" date="1985" name="Cell">
        <title>Homeo box genes of the Antennapedia and bithorax complexes of Drosophila.</title>
        <authorList>
            <person name="Regulski M."/>
            <person name="Harding K."/>
            <person name="Kostriken R."/>
            <person name="Karch F."/>
            <person name="Levine M."/>
            <person name="McGinnis W."/>
        </authorList>
    </citation>
    <scope>NUCLEOTIDE SEQUENCE [MRNA] OF 366-482</scope>
</reference>
<reference key="7">
    <citation type="journal article" date="2002" name="Cell">
        <title>The Drosophila Hox gene deformed sculpts head morphology via direct regulation of the apoptosis activator reaper.</title>
        <authorList>
            <person name="Lohmann I."/>
            <person name="McGinnis N."/>
            <person name="Bodmer M."/>
            <person name="McGinnis W."/>
        </authorList>
    </citation>
    <scope>FUNCTION</scope>
</reference>
<reference key="8">
    <citation type="journal article" date="2002" name="Evol. Dev.">
        <title>Hox genes and the evolution of the arthropod body plan.</title>
        <authorList>
            <person name="Hughes C.L."/>
            <person name="Kaufman T.C."/>
        </authorList>
    </citation>
    <scope>REVIEW ON FUNCTION</scope>
    <scope>TISSUE SPECIFICITY</scope>
</reference>
<dbReference type="EMBL" id="X05136">
    <property type="protein sequence ID" value="CAA28782.1"/>
    <property type="molecule type" value="Genomic_DNA"/>
</dbReference>
<dbReference type="EMBL" id="AE001572">
    <property type="protein sequence ID" value="AAD19796.1"/>
    <property type="molecule type" value="Genomic_DNA"/>
</dbReference>
<dbReference type="EMBL" id="AE014297">
    <property type="protein sequence ID" value="AAF54083.2"/>
    <property type="molecule type" value="Genomic_DNA"/>
</dbReference>
<dbReference type="EMBL" id="M13373">
    <property type="protein sequence ID" value="AAA28375.1"/>
    <property type="molecule type" value="mRNA"/>
</dbReference>
<dbReference type="PIR" id="A26638">
    <property type="entry name" value="A26638"/>
</dbReference>
<dbReference type="RefSeq" id="NP_477201.1">
    <property type="nucleotide sequence ID" value="NM_057853.3"/>
</dbReference>
<dbReference type="SMR" id="P07548"/>
<dbReference type="BioGRID" id="66030">
    <property type="interactions" value="41"/>
</dbReference>
<dbReference type="DIP" id="DIP-18055N"/>
<dbReference type="FunCoup" id="P07548">
    <property type="interactions" value="50"/>
</dbReference>
<dbReference type="IntAct" id="P07548">
    <property type="interactions" value="20"/>
</dbReference>
<dbReference type="STRING" id="7227.FBpp0081138"/>
<dbReference type="PaxDb" id="7227-FBpp0081138"/>
<dbReference type="DNASU" id="40832"/>
<dbReference type="EnsemblMetazoa" id="FBtr0081621">
    <property type="protein sequence ID" value="FBpp0081138"/>
    <property type="gene ID" value="FBgn0000439"/>
</dbReference>
<dbReference type="GeneID" id="40832"/>
<dbReference type="KEGG" id="dme:Dmel_CG2189"/>
<dbReference type="UCSC" id="CG2189-RA">
    <property type="organism name" value="d. melanogaster"/>
</dbReference>
<dbReference type="AGR" id="FB:FBgn0000439"/>
<dbReference type="CTD" id="40832"/>
<dbReference type="FlyBase" id="FBgn0000439">
    <property type="gene designation" value="Dfd"/>
</dbReference>
<dbReference type="VEuPathDB" id="VectorBase:FBgn0000439"/>
<dbReference type="eggNOG" id="KOG0489">
    <property type="taxonomic scope" value="Eukaryota"/>
</dbReference>
<dbReference type="HOGENOM" id="CLU_468753_0_0_1"/>
<dbReference type="InParanoid" id="P07548"/>
<dbReference type="OMA" id="GMTGHPH"/>
<dbReference type="OrthoDB" id="6159439at2759"/>
<dbReference type="PhylomeDB" id="P07548"/>
<dbReference type="SignaLink" id="P07548"/>
<dbReference type="BioGRID-ORCS" id="40832">
    <property type="hits" value="0 hits in 3 CRISPR screens"/>
</dbReference>
<dbReference type="GenomeRNAi" id="40832"/>
<dbReference type="PRO" id="PR:P07548"/>
<dbReference type="Proteomes" id="UP000000803">
    <property type="component" value="Chromosome 3R"/>
</dbReference>
<dbReference type="Bgee" id="FBgn0000439">
    <property type="expression patterns" value="Expressed in epithelial cell in proboscis and 61 other cell types or tissues"/>
</dbReference>
<dbReference type="ExpressionAtlas" id="P07548">
    <property type="expression patterns" value="baseline and differential"/>
</dbReference>
<dbReference type="GO" id="GO:0043025">
    <property type="term" value="C:neuronal cell body"/>
    <property type="evidence" value="ECO:0000314"/>
    <property type="project" value="FlyBase"/>
</dbReference>
<dbReference type="GO" id="GO:0005654">
    <property type="term" value="C:nucleoplasm"/>
    <property type="evidence" value="ECO:0000318"/>
    <property type="project" value="GO_Central"/>
</dbReference>
<dbReference type="GO" id="GO:0005634">
    <property type="term" value="C:nucleus"/>
    <property type="evidence" value="ECO:0000314"/>
    <property type="project" value="FlyBase"/>
</dbReference>
<dbReference type="GO" id="GO:0003677">
    <property type="term" value="F:DNA binding"/>
    <property type="evidence" value="ECO:0000314"/>
    <property type="project" value="UniProtKB"/>
</dbReference>
<dbReference type="GO" id="GO:0000981">
    <property type="term" value="F:DNA-binding transcription factor activity, RNA polymerase II-specific"/>
    <property type="evidence" value="ECO:0000314"/>
    <property type="project" value="FlyBase"/>
</dbReference>
<dbReference type="GO" id="GO:0140297">
    <property type="term" value="F:DNA-binding transcription factor binding"/>
    <property type="evidence" value="ECO:0000353"/>
    <property type="project" value="FlyBase"/>
</dbReference>
<dbReference type="GO" id="GO:0060090">
    <property type="term" value="F:molecular adaptor activity"/>
    <property type="evidence" value="ECO:0000269"/>
    <property type="project" value="DisProt"/>
</dbReference>
<dbReference type="GO" id="GO:0000978">
    <property type="term" value="F:RNA polymerase II cis-regulatory region sequence-specific DNA binding"/>
    <property type="evidence" value="ECO:0000318"/>
    <property type="project" value="GO_Central"/>
</dbReference>
<dbReference type="GO" id="GO:0000977">
    <property type="term" value="F:RNA polymerase II transcription regulatory region sequence-specific DNA binding"/>
    <property type="evidence" value="ECO:0000314"/>
    <property type="project" value="FlyBase"/>
</dbReference>
<dbReference type="GO" id="GO:0043565">
    <property type="term" value="F:sequence-specific DNA binding"/>
    <property type="evidence" value="ECO:0000314"/>
    <property type="project" value="FlyBase"/>
</dbReference>
<dbReference type="GO" id="GO:0009952">
    <property type="term" value="P:anterior/posterior pattern specification"/>
    <property type="evidence" value="ECO:0000318"/>
    <property type="project" value="GO_Central"/>
</dbReference>
<dbReference type="GO" id="GO:1990403">
    <property type="term" value="P:embryonic brain development"/>
    <property type="evidence" value="ECO:0000315"/>
    <property type="project" value="FlyBase"/>
</dbReference>
<dbReference type="GO" id="GO:0060322">
    <property type="term" value="P:head development"/>
    <property type="evidence" value="ECO:0000315"/>
    <property type="project" value="FlyBase"/>
</dbReference>
<dbReference type="GO" id="GO:0060323">
    <property type="term" value="P:head morphogenesis"/>
    <property type="evidence" value="ECO:0000315"/>
    <property type="project" value="FlyBase"/>
</dbReference>
<dbReference type="GO" id="GO:0000122">
    <property type="term" value="P:negative regulation of transcription by RNA polymerase II"/>
    <property type="evidence" value="ECO:0000314"/>
    <property type="project" value="FlyBase"/>
</dbReference>
<dbReference type="GO" id="GO:1902339">
    <property type="term" value="P:positive regulation of apoptotic process involved in morphogenesis"/>
    <property type="evidence" value="ECO:0000315"/>
    <property type="project" value="FlyBase"/>
</dbReference>
<dbReference type="GO" id="GO:0045944">
    <property type="term" value="P:positive regulation of transcription by RNA polymerase II"/>
    <property type="evidence" value="ECO:0000314"/>
    <property type="project" value="FlyBase"/>
</dbReference>
<dbReference type="GO" id="GO:0035289">
    <property type="term" value="P:posterior head segmentation"/>
    <property type="evidence" value="ECO:0000315"/>
    <property type="project" value="FlyBase"/>
</dbReference>
<dbReference type="GO" id="GO:0010468">
    <property type="term" value="P:regulation of gene expression"/>
    <property type="evidence" value="ECO:0000315"/>
    <property type="project" value="FlyBase"/>
</dbReference>
<dbReference type="GO" id="GO:0007380">
    <property type="term" value="P:specification of segmental identity, head"/>
    <property type="evidence" value="ECO:0000315"/>
    <property type="project" value="FlyBase"/>
</dbReference>
<dbReference type="CDD" id="cd00086">
    <property type="entry name" value="homeodomain"/>
    <property type="match status" value="1"/>
</dbReference>
<dbReference type="DisProt" id="DP02557"/>
<dbReference type="FunFam" id="1.10.10.60:FF:000029">
    <property type="entry name" value="Homeobox protein Hox-D4"/>
    <property type="match status" value="1"/>
</dbReference>
<dbReference type="Gene3D" id="1.10.10.60">
    <property type="entry name" value="Homeodomain-like"/>
    <property type="match status" value="1"/>
</dbReference>
<dbReference type="InterPro" id="IPR050609">
    <property type="entry name" value="Antp_homeobox_Deformed_sf"/>
</dbReference>
<dbReference type="InterPro" id="IPR001356">
    <property type="entry name" value="HD"/>
</dbReference>
<dbReference type="InterPro" id="IPR020479">
    <property type="entry name" value="HD_metazoa"/>
</dbReference>
<dbReference type="InterPro" id="IPR017995">
    <property type="entry name" value="Homeobox_antennapedia"/>
</dbReference>
<dbReference type="InterPro" id="IPR001827">
    <property type="entry name" value="Homeobox_Antennapedia_CS"/>
</dbReference>
<dbReference type="InterPro" id="IPR017970">
    <property type="entry name" value="Homeobox_CS"/>
</dbReference>
<dbReference type="InterPro" id="IPR009057">
    <property type="entry name" value="Homeodomain-like_sf"/>
</dbReference>
<dbReference type="PANTHER" id="PTHR45771">
    <property type="entry name" value="HOMEOTIC PROTEIN DEFORMED"/>
    <property type="match status" value="1"/>
</dbReference>
<dbReference type="PANTHER" id="PTHR45771:SF14">
    <property type="entry name" value="HOMEOTIC PROTEIN DEFORMED"/>
    <property type="match status" value="1"/>
</dbReference>
<dbReference type="Pfam" id="PF00046">
    <property type="entry name" value="Homeodomain"/>
    <property type="match status" value="1"/>
</dbReference>
<dbReference type="PRINTS" id="PR00025">
    <property type="entry name" value="ANTENNAPEDIA"/>
</dbReference>
<dbReference type="PRINTS" id="PR00024">
    <property type="entry name" value="HOMEOBOX"/>
</dbReference>
<dbReference type="SMART" id="SM00389">
    <property type="entry name" value="HOX"/>
    <property type="match status" value="1"/>
</dbReference>
<dbReference type="SUPFAM" id="SSF46689">
    <property type="entry name" value="Homeodomain-like"/>
    <property type="match status" value="1"/>
</dbReference>
<dbReference type="PROSITE" id="PS00032">
    <property type="entry name" value="ANTENNAPEDIA"/>
    <property type="match status" value="1"/>
</dbReference>
<dbReference type="PROSITE" id="PS00027">
    <property type="entry name" value="HOMEOBOX_1"/>
    <property type="match status" value="1"/>
</dbReference>
<dbReference type="PROSITE" id="PS50071">
    <property type="entry name" value="HOMEOBOX_2"/>
    <property type="match status" value="1"/>
</dbReference>
<accession>P07548</accession>
<accession>Q9UAL9</accession>
<accession>Q9VI48</accession>
<comment type="function">
    <text evidence="3 5">Sequence-specific transcription factor which is part of a developmental regulatory system that provides cells with specific positional identities on the anterior-posterior axis. Homeotic protein controlling Drosophila head development. Transcriptional activator of the apoptotic activator protein rpr in cells at the maxillary/mandibular boundary.</text>
</comment>
<comment type="interaction">
    <interactant intactId="EBI-458925">
        <id>P07548</id>
    </interactant>
    <interactant intactId="EBI-101537">
        <id>P40427</id>
        <label>exd</label>
    </interactant>
    <organismsDiffer>false</organismsDiffer>
    <experiments>2</experiments>
</comment>
<comment type="subcellular location">
    <subcellularLocation>
        <location>Nucleus</location>
    </subcellularLocation>
</comment>
<comment type="tissue specificity">
    <text evidence="4">Expressed in the mandibular and maxillary segments of the head, with some expression in the posterior intercalary segment which become part of the CNS. In the imaginal tissues, expressed in part of the eye antennal disk which give rise to portions of the head capsule and to a small patch of expression in the basal-most portion of the labial disk.</text>
</comment>
<comment type="similarity">
    <text evidence="6">Belongs to the Antp homeobox family. Deformed subfamily.</text>
</comment>
<proteinExistence type="evidence at protein level"/>
<name>DFD_DROME</name>
<evidence type="ECO:0000255" key="1">
    <source>
        <dbReference type="PROSITE-ProRule" id="PRU00108"/>
    </source>
</evidence>
<evidence type="ECO:0000256" key="2">
    <source>
        <dbReference type="SAM" id="MobiDB-lite"/>
    </source>
</evidence>
<evidence type="ECO:0000269" key="3">
    <source>
    </source>
</evidence>
<evidence type="ECO:0000269" key="4">
    <source>
    </source>
</evidence>
<evidence type="ECO:0000269" key="5">
    <source>
    </source>
</evidence>
<evidence type="ECO:0000305" key="6"/>
<organism>
    <name type="scientific">Drosophila melanogaster</name>
    <name type="common">Fruit fly</name>
    <dbReference type="NCBI Taxonomy" id="7227"/>
    <lineage>
        <taxon>Eukaryota</taxon>
        <taxon>Metazoa</taxon>
        <taxon>Ecdysozoa</taxon>
        <taxon>Arthropoda</taxon>
        <taxon>Hexapoda</taxon>
        <taxon>Insecta</taxon>
        <taxon>Pterygota</taxon>
        <taxon>Neoptera</taxon>
        <taxon>Endopterygota</taxon>
        <taxon>Diptera</taxon>
        <taxon>Brachycera</taxon>
        <taxon>Muscomorpha</taxon>
        <taxon>Ephydroidea</taxon>
        <taxon>Drosophilidae</taxon>
        <taxon>Drosophila</taxon>
        <taxon>Sophophora</taxon>
    </lineage>
</organism>
<protein>
    <recommendedName>
        <fullName>Homeotic protein deformed</fullName>
    </recommendedName>
</protein>
<sequence>MSSFLMGYPHAPHHVQSPMSMGNGLDPKFPPLADDYHHYNGHYSMTASTGHMSGAVGGGAGVGSVGGGGAGGMTGHPHSMHPADMVSDYMAHHHNPHSHSHSHTHSLPHHHSNSAISGHHQASAGGYSSNYANATPPSHPHSHPHAHPHQSLGYYVHHAPEFISAGAVHSDPTNGYGPAANVPNTSNGGGGGGSGAVLGGGAVGGSANGYYGGYGGGYGTANGSVGSTHSQGHSPHSQMMDLPLQCSSTEPPTNTALGLQELGLKLEKRIEEAVPAGQQLQELGMRLRCDDMGSENDDMSEEDRLMLDRSPDELGSNDNDDDLGDSDSDEDLMAETTDGERIIYPWMKKIHVAGVANGSYQPGMEPKRQRTAYTRHQILELEKEFHYNRYLTRRRRIEIAHTLVLSERQIKIWFQNRRMKWKKDNKLPNTKNVRKKTVDANGNPTPVAKKPTKRAASKKQQQAQQQQQSQQQQTQQTPVMNECIRSDSLESIGDVSSSLGNPPYIPAAPETTSSYPGSQQHLSNNNNNGSGNNNNNNNNNNSNLNNNNNNNQMGHTNLHGHLQQQQSDLMTNLQLHIKQDYDLTAL</sequence>
<feature type="chain" id="PRO_0000200261" description="Homeotic protein deformed">
    <location>
        <begin position="1"/>
        <end position="586"/>
    </location>
</feature>
<feature type="DNA-binding region" description="Homeobox" evidence="1">
    <location>
        <begin position="366"/>
        <end position="425"/>
    </location>
</feature>
<feature type="region of interest" description="Disordered" evidence="2">
    <location>
        <begin position="90"/>
        <end position="150"/>
    </location>
</feature>
<feature type="region of interest" description="Disordered" evidence="2">
    <location>
        <begin position="225"/>
        <end position="255"/>
    </location>
</feature>
<feature type="region of interest" description="Disordered" evidence="2">
    <location>
        <begin position="309"/>
        <end position="331"/>
    </location>
</feature>
<feature type="region of interest" description="Disordered" evidence="2">
    <location>
        <begin position="424"/>
        <end position="479"/>
    </location>
</feature>
<feature type="region of interest" description="Disordered" evidence="2">
    <location>
        <begin position="492"/>
        <end position="565"/>
    </location>
</feature>
<feature type="short sequence motif" description="Antp-type hexapeptide">
    <location>
        <begin position="343"/>
        <end position="348"/>
    </location>
</feature>
<feature type="compositionally biased region" description="Basic residues" evidence="2">
    <location>
        <begin position="92"/>
        <end position="112"/>
    </location>
</feature>
<feature type="compositionally biased region" description="Polar residues" evidence="2">
    <location>
        <begin position="126"/>
        <end position="135"/>
    </location>
</feature>
<feature type="compositionally biased region" description="Polar residues" evidence="2">
    <location>
        <begin position="227"/>
        <end position="237"/>
    </location>
</feature>
<feature type="compositionally biased region" description="Polar residues" evidence="2">
    <location>
        <begin position="245"/>
        <end position="255"/>
    </location>
</feature>
<feature type="compositionally biased region" description="Acidic residues" evidence="2">
    <location>
        <begin position="318"/>
        <end position="331"/>
    </location>
</feature>
<feature type="compositionally biased region" description="Low complexity" evidence="2">
    <location>
        <begin position="458"/>
        <end position="477"/>
    </location>
</feature>
<feature type="compositionally biased region" description="Polar residues" evidence="2">
    <location>
        <begin position="510"/>
        <end position="521"/>
    </location>
</feature>
<feature type="compositionally biased region" description="Low complexity" evidence="2">
    <location>
        <begin position="522"/>
        <end position="551"/>
    </location>
</feature>
<feature type="sequence conflict" description="In Ref. 1; CAA28782." evidence="6" ref="1">
    <original>L</original>
    <variation>V</variation>
    <location>
        <position position="32"/>
    </location>
</feature>
<feature type="sequence conflict" description="In Ref. 5; AAA28375." evidence="6" ref="5">
    <original>S</original>
    <variation>I</variation>
    <location>
        <position position="227"/>
    </location>
</feature>
<feature type="sequence conflict" description="In Ref. 6." evidence="6" ref="6">
    <original>G</original>
    <variation>A</variation>
    <location>
        <position position="442"/>
    </location>
</feature>
<feature type="sequence conflict" description="In Ref. 5; AAA28375." evidence="6" ref="5">
    <original>N</original>
    <variation>K</variation>
    <location>
        <position position="443"/>
    </location>
</feature>
<feature type="sequence conflict" description="In Ref. 6." evidence="6" ref="6">
    <location>
        <position position="456"/>
    </location>
</feature>
<feature type="sequence conflict" description="In Ref. 1 and 5." evidence="6" ref="1 5">
    <original>T</original>
    <variation>TQQT</variation>
    <location>
        <position position="477"/>
    </location>
</feature>
<feature type="sequence conflict" description="In Ref. 1; CAA28782." evidence="6" ref="1">
    <original>N</original>
    <variation>NN</variation>
    <location>
        <position position="541"/>
    </location>
</feature>
<gene>
    <name type="primary">Dfd</name>
    <name type="ORF">CG2189</name>
</gene>
<keyword id="KW-0217">Developmental protein</keyword>
<keyword id="KW-0238">DNA-binding</keyword>
<keyword id="KW-0371">Homeobox</keyword>
<keyword id="KW-0539">Nucleus</keyword>
<keyword id="KW-1185">Reference proteome</keyword>
<keyword id="KW-0804">Transcription</keyword>
<keyword id="KW-0805">Transcription regulation</keyword>